<sequence length="194" mass="20688">MNLVLASTSPRRKELLTHIGLGRSDFTFEQVAPDIDETPRSGELPRDYVQRLAAEKAQAGLALCSDMSQPAVLGSDTIVVLENEILGKPVDDADAKRVLRALSGRAHTVMTAVALANANHTAMRLVETLVRFCVLSDADIDAYVASQEPMDKAGSYGIQGLGGCFVESIDGSYSCVVGLPLVETRQLLSEAGII</sequence>
<gene>
    <name type="ordered locus">SO_4095</name>
</gene>
<comment type="function">
    <text evidence="1">Nucleoside triphosphate pyrophosphatase that hydrolyzes dTTP and UTP. May have a dual role in cell division arrest and in preventing the incorporation of modified nucleotides into cellular nucleic acids.</text>
</comment>
<comment type="catalytic activity">
    <reaction evidence="1">
        <text>dTTP + H2O = dTMP + diphosphate + H(+)</text>
        <dbReference type="Rhea" id="RHEA:28534"/>
        <dbReference type="ChEBI" id="CHEBI:15377"/>
        <dbReference type="ChEBI" id="CHEBI:15378"/>
        <dbReference type="ChEBI" id="CHEBI:33019"/>
        <dbReference type="ChEBI" id="CHEBI:37568"/>
        <dbReference type="ChEBI" id="CHEBI:63528"/>
        <dbReference type="EC" id="3.6.1.9"/>
    </reaction>
</comment>
<comment type="catalytic activity">
    <reaction evidence="1">
        <text>UTP + H2O = UMP + diphosphate + H(+)</text>
        <dbReference type="Rhea" id="RHEA:29395"/>
        <dbReference type="ChEBI" id="CHEBI:15377"/>
        <dbReference type="ChEBI" id="CHEBI:15378"/>
        <dbReference type="ChEBI" id="CHEBI:33019"/>
        <dbReference type="ChEBI" id="CHEBI:46398"/>
        <dbReference type="ChEBI" id="CHEBI:57865"/>
        <dbReference type="EC" id="3.6.1.9"/>
    </reaction>
</comment>
<comment type="cofactor">
    <cofactor evidence="1">
        <name>a divalent metal cation</name>
        <dbReference type="ChEBI" id="CHEBI:60240"/>
    </cofactor>
</comment>
<comment type="subcellular location">
    <subcellularLocation>
        <location evidence="1">Cytoplasm</location>
    </subcellularLocation>
</comment>
<comment type="similarity">
    <text evidence="1">Belongs to the Maf family. YhdE subfamily.</text>
</comment>
<feature type="chain" id="PRO_0000123059" description="dTTP/UTP pyrophosphatase">
    <location>
        <begin position="1"/>
        <end position="194"/>
    </location>
</feature>
<feature type="active site" description="Proton acceptor" evidence="1">
    <location>
        <position position="76"/>
    </location>
</feature>
<feature type="site" description="Important for substrate specificity" evidence="1">
    <location>
        <position position="11"/>
    </location>
</feature>
<feature type="site" description="Important for substrate specificity" evidence="1">
    <location>
        <position position="77"/>
    </location>
</feature>
<feature type="site" description="Important for substrate specificity" evidence="1">
    <location>
        <position position="159"/>
    </location>
</feature>
<accession>Q8EA14</accession>
<dbReference type="EC" id="3.6.1.9" evidence="1"/>
<dbReference type="EMBL" id="AE014299">
    <property type="protein sequence ID" value="AAN57069.1"/>
    <property type="molecule type" value="Genomic_DNA"/>
</dbReference>
<dbReference type="RefSeq" id="NP_719625.1">
    <property type="nucleotide sequence ID" value="NC_004347.2"/>
</dbReference>
<dbReference type="RefSeq" id="WP_011073799.1">
    <property type="nucleotide sequence ID" value="NC_004347.2"/>
</dbReference>
<dbReference type="SMR" id="Q8EA14"/>
<dbReference type="STRING" id="211586.SO_4095"/>
<dbReference type="PaxDb" id="211586-SO_4095"/>
<dbReference type="KEGG" id="son:SO_4095"/>
<dbReference type="PATRIC" id="fig|211586.12.peg.3961"/>
<dbReference type="eggNOG" id="COG0424">
    <property type="taxonomic scope" value="Bacteria"/>
</dbReference>
<dbReference type="HOGENOM" id="CLU_040416_2_1_6"/>
<dbReference type="OrthoDB" id="9807767at2"/>
<dbReference type="PhylomeDB" id="Q8EA14"/>
<dbReference type="BioCyc" id="SONE211586:G1GMP-3783-MONOMER"/>
<dbReference type="Proteomes" id="UP000008186">
    <property type="component" value="Chromosome"/>
</dbReference>
<dbReference type="GO" id="GO:0005737">
    <property type="term" value="C:cytoplasm"/>
    <property type="evidence" value="ECO:0007669"/>
    <property type="project" value="UniProtKB-SubCell"/>
</dbReference>
<dbReference type="GO" id="GO:0036218">
    <property type="term" value="F:dTTP diphosphatase activity"/>
    <property type="evidence" value="ECO:0007669"/>
    <property type="project" value="RHEA"/>
</dbReference>
<dbReference type="GO" id="GO:0047429">
    <property type="term" value="F:nucleoside triphosphate diphosphatase activity"/>
    <property type="evidence" value="ECO:0000318"/>
    <property type="project" value="GO_Central"/>
</dbReference>
<dbReference type="GO" id="GO:0036221">
    <property type="term" value="F:UTP diphosphatase activity"/>
    <property type="evidence" value="ECO:0007669"/>
    <property type="project" value="RHEA"/>
</dbReference>
<dbReference type="GO" id="GO:0009117">
    <property type="term" value="P:nucleotide metabolic process"/>
    <property type="evidence" value="ECO:0007669"/>
    <property type="project" value="UniProtKB-KW"/>
</dbReference>
<dbReference type="CDD" id="cd00555">
    <property type="entry name" value="Maf"/>
    <property type="match status" value="1"/>
</dbReference>
<dbReference type="FunFam" id="3.90.950.10:FF:000004">
    <property type="entry name" value="dTTP/UTP pyrophosphatase"/>
    <property type="match status" value="1"/>
</dbReference>
<dbReference type="Gene3D" id="3.90.950.10">
    <property type="match status" value="1"/>
</dbReference>
<dbReference type="HAMAP" id="MF_00528">
    <property type="entry name" value="Maf"/>
    <property type="match status" value="1"/>
</dbReference>
<dbReference type="InterPro" id="IPR029001">
    <property type="entry name" value="ITPase-like_fam"/>
</dbReference>
<dbReference type="InterPro" id="IPR003697">
    <property type="entry name" value="Maf-like"/>
</dbReference>
<dbReference type="NCBIfam" id="TIGR00172">
    <property type="entry name" value="maf"/>
    <property type="match status" value="1"/>
</dbReference>
<dbReference type="PANTHER" id="PTHR43213">
    <property type="entry name" value="BIFUNCTIONAL DTTP/UTP PYROPHOSPHATASE/METHYLTRANSFERASE PROTEIN-RELATED"/>
    <property type="match status" value="1"/>
</dbReference>
<dbReference type="PANTHER" id="PTHR43213:SF5">
    <property type="entry name" value="BIFUNCTIONAL DTTP_UTP PYROPHOSPHATASE_METHYLTRANSFERASE PROTEIN-RELATED"/>
    <property type="match status" value="1"/>
</dbReference>
<dbReference type="Pfam" id="PF02545">
    <property type="entry name" value="Maf"/>
    <property type="match status" value="1"/>
</dbReference>
<dbReference type="PIRSF" id="PIRSF006305">
    <property type="entry name" value="Maf"/>
    <property type="match status" value="1"/>
</dbReference>
<dbReference type="SUPFAM" id="SSF52972">
    <property type="entry name" value="ITPase-like"/>
    <property type="match status" value="1"/>
</dbReference>
<evidence type="ECO:0000255" key="1">
    <source>
        <dbReference type="HAMAP-Rule" id="MF_00528"/>
    </source>
</evidence>
<keyword id="KW-0963">Cytoplasm</keyword>
<keyword id="KW-0378">Hydrolase</keyword>
<keyword id="KW-0546">Nucleotide metabolism</keyword>
<keyword id="KW-1185">Reference proteome</keyword>
<organism>
    <name type="scientific">Shewanella oneidensis (strain ATCC 700550 / JCM 31522 / CIP 106686 / LMG 19005 / NCIMB 14063 / MR-1)</name>
    <dbReference type="NCBI Taxonomy" id="211586"/>
    <lineage>
        <taxon>Bacteria</taxon>
        <taxon>Pseudomonadati</taxon>
        <taxon>Pseudomonadota</taxon>
        <taxon>Gammaproteobacteria</taxon>
        <taxon>Alteromonadales</taxon>
        <taxon>Shewanellaceae</taxon>
        <taxon>Shewanella</taxon>
    </lineage>
</organism>
<proteinExistence type="inferred from homology"/>
<protein>
    <recommendedName>
        <fullName evidence="1">dTTP/UTP pyrophosphatase</fullName>
        <shortName evidence="1">dTTPase/UTPase</shortName>
        <ecNumber evidence="1">3.6.1.9</ecNumber>
    </recommendedName>
    <alternativeName>
        <fullName evidence="1">Nucleoside triphosphate pyrophosphatase</fullName>
    </alternativeName>
    <alternativeName>
        <fullName evidence="1">Nucleotide pyrophosphatase</fullName>
        <shortName evidence="1">Nucleotide PPase</shortName>
    </alternativeName>
</protein>
<reference key="1">
    <citation type="journal article" date="2002" name="Nat. Biotechnol.">
        <title>Genome sequence of the dissimilatory metal ion-reducing bacterium Shewanella oneidensis.</title>
        <authorList>
            <person name="Heidelberg J.F."/>
            <person name="Paulsen I.T."/>
            <person name="Nelson K.E."/>
            <person name="Gaidos E.J."/>
            <person name="Nelson W.C."/>
            <person name="Read T.D."/>
            <person name="Eisen J.A."/>
            <person name="Seshadri R."/>
            <person name="Ward N.L."/>
            <person name="Methe B.A."/>
            <person name="Clayton R.A."/>
            <person name="Meyer T."/>
            <person name="Tsapin A."/>
            <person name="Scott J."/>
            <person name="Beanan M.J."/>
            <person name="Brinkac L.M."/>
            <person name="Daugherty S.C."/>
            <person name="DeBoy R.T."/>
            <person name="Dodson R.J."/>
            <person name="Durkin A.S."/>
            <person name="Haft D.H."/>
            <person name="Kolonay J.F."/>
            <person name="Madupu R."/>
            <person name="Peterson J.D."/>
            <person name="Umayam L.A."/>
            <person name="White O."/>
            <person name="Wolf A.M."/>
            <person name="Vamathevan J.J."/>
            <person name="Weidman J.F."/>
            <person name="Impraim M."/>
            <person name="Lee K."/>
            <person name="Berry K.J."/>
            <person name="Lee C."/>
            <person name="Mueller J."/>
            <person name="Khouri H.M."/>
            <person name="Gill J."/>
            <person name="Utterback T.R."/>
            <person name="McDonald L.A."/>
            <person name="Feldblyum T.V."/>
            <person name="Smith H.O."/>
            <person name="Venter J.C."/>
            <person name="Nealson K.H."/>
            <person name="Fraser C.M."/>
        </authorList>
    </citation>
    <scope>NUCLEOTIDE SEQUENCE [LARGE SCALE GENOMIC DNA]</scope>
    <source>
        <strain>ATCC 700550 / JCM 31522 / CIP 106686 / LMG 19005 / NCIMB 14063 / MR-1</strain>
    </source>
</reference>
<name>NTPPA_SHEON</name>